<keyword id="KW-0012">Acyltransferase</keyword>
<keyword id="KW-0450">Lipoyl</keyword>
<keyword id="KW-0808">Transferase</keyword>
<keyword id="KW-0816">Tricarboxylic acid cycle</keyword>
<comment type="function">
    <text evidence="2">E2 component of the 2-oxoglutarate dehydrogenase (OGDH) complex which catalyzes the second step in the conversion of 2-oxoglutarate to succinyl-CoA and CO(2).</text>
</comment>
<comment type="catalytic activity">
    <reaction evidence="2">
        <text>N(6)-[(R)-dihydrolipoyl]-L-lysyl-[protein] + succinyl-CoA = N(6)-[(R)-S(8)-succinyldihydrolipoyl]-L-lysyl-[protein] + CoA</text>
        <dbReference type="Rhea" id="RHEA:15213"/>
        <dbReference type="Rhea" id="RHEA-COMP:10475"/>
        <dbReference type="Rhea" id="RHEA-COMP:20092"/>
        <dbReference type="ChEBI" id="CHEBI:57287"/>
        <dbReference type="ChEBI" id="CHEBI:57292"/>
        <dbReference type="ChEBI" id="CHEBI:83100"/>
        <dbReference type="ChEBI" id="CHEBI:83120"/>
        <dbReference type="EC" id="2.3.1.61"/>
    </reaction>
</comment>
<comment type="cofactor">
    <cofactor evidence="1">
        <name>(R)-lipoate</name>
        <dbReference type="ChEBI" id="CHEBI:83088"/>
    </cofactor>
    <text evidence="1">Binds 1 lipoyl cofactor covalently.</text>
</comment>
<comment type="pathway">
    <text>Amino-acid degradation; L-lysine degradation via saccharopine pathway; glutaryl-CoA from L-lysine: step 6/6.</text>
</comment>
<comment type="subunit">
    <text evidence="2">Forms a 24-polypeptide structural core with octahedral symmetry. Part of the 2-oxoglutarate dehydrogenase (OGDH) complex composed of E1 (2-oxoglutarate dehydrogenase), E2 (dihydrolipoamide succinyltransferase) and E3 (dihydrolipoamide dehydrogenase); the complex contains multiple copies of the three enzymatic components (E1, E2 and E3).</text>
</comment>
<comment type="similarity">
    <text evidence="6">Belongs to the 2-oxoacid dehydrogenase family.</text>
</comment>
<evidence type="ECO:0000250" key="1"/>
<evidence type="ECO:0000250" key="2">
    <source>
        <dbReference type="UniProtKB" id="P0AFG6"/>
    </source>
</evidence>
<evidence type="ECO:0000255" key="3">
    <source>
        <dbReference type="PROSITE-ProRule" id="PRU01066"/>
    </source>
</evidence>
<evidence type="ECO:0000255" key="4">
    <source>
        <dbReference type="PROSITE-ProRule" id="PRU01170"/>
    </source>
</evidence>
<evidence type="ECO:0000256" key="5">
    <source>
        <dbReference type="SAM" id="MobiDB-lite"/>
    </source>
</evidence>
<evidence type="ECO:0000305" key="6"/>
<dbReference type="EC" id="2.3.1.61" evidence="2"/>
<dbReference type="EMBL" id="CP000255">
    <property type="protein sequence ID" value="ABD22597.1"/>
    <property type="molecule type" value="Genomic_DNA"/>
</dbReference>
<dbReference type="RefSeq" id="WP_001115440.1">
    <property type="nucleotide sequence ID" value="NZ_CP027476.1"/>
</dbReference>
<dbReference type="SMR" id="Q2FH26"/>
<dbReference type="KEGG" id="saa:SAUSA300_1305"/>
<dbReference type="HOGENOM" id="CLU_016733_0_0_9"/>
<dbReference type="OMA" id="NMPQTAV"/>
<dbReference type="UniPathway" id="UPA00868">
    <property type="reaction ID" value="UER00840"/>
</dbReference>
<dbReference type="PHI-base" id="PHI:7353"/>
<dbReference type="Proteomes" id="UP000001939">
    <property type="component" value="Chromosome"/>
</dbReference>
<dbReference type="GO" id="GO:0005829">
    <property type="term" value="C:cytosol"/>
    <property type="evidence" value="ECO:0007669"/>
    <property type="project" value="TreeGrafter"/>
</dbReference>
<dbReference type="GO" id="GO:0045252">
    <property type="term" value="C:oxoglutarate dehydrogenase complex"/>
    <property type="evidence" value="ECO:0007669"/>
    <property type="project" value="InterPro"/>
</dbReference>
<dbReference type="GO" id="GO:0004149">
    <property type="term" value="F:dihydrolipoyllysine-residue succinyltransferase activity"/>
    <property type="evidence" value="ECO:0007669"/>
    <property type="project" value="UniProtKB-EC"/>
</dbReference>
<dbReference type="GO" id="GO:0033512">
    <property type="term" value="P:L-lysine catabolic process to acetyl-CoA via saccharopine"/>
    <property type="evidence" value="ECO:0007669"/>
    <property type="project" value="UniProtKB-UniPathway"/>
</dbReference>
<dbReference type="GO" id="GO:0006099">
    <property type="term" value="P:tricarboxylic acid cycle"/>
    <property type="evidence" value="ECO:0007669"/>
    <property type="project" value="UniProtKB-KW"/>
</dbReference>
<dbReference type="CDD" id="cd06849">
    <property type="entry name" value="lipoyl_domain"/>
    <property type="match status" value="1"/>
</dbReference>
<dbReference type="FunFam" id="3.30.559.10:FF:000007">
    <property type="entry name" value="Dihydrolipoamide acetyltransferase component of pyruvate dehydrogenase complex"/>
    <property type="match status" value="1"/>
</dbReference>
<dbReference type="Gene3D" id="2.40.50.100">
    <property type="match status" value="1"/>
</dbReference>
<dbReference type="Gene3D" id="3.30.559.10">
    <property type="entry name" value="Chloramphenicol acetyltransferase-like domain"/>
    <property type="match status" value="1"/>
</dbReference>
<dbReference type="Gene3D" id="4.10.320.10">
    <property type="entry name" value="E3-binding domain"/>
    <property type="match status" value="1"/>
</dbReference>
<dbReference type="InterPro" id="IPR003016">
    <property type="entry name" value="2-oxoA_DH_lipoyl-BS"/>
</dbReference>
<dbReference type="InterPro" id="IPR050537">
    <property type="entry name" value="2-oxoacid_dehydrogenase"/>
</dbReference>
<dbReference type="InterPro" id="IPR001078">
    <property type="entry name" value="2-oxoacid_DH_actylTfrase"/>
</dbReference>
<dbReference type="InterPro" id="IPR000089">
    <property type="entry name" value="Biotin_lipoyl"/>
</dbReference>
<dbReference type="InterPro" id="IPR023213">
    <property type="entry name" value="CAT-like_dom_sf"/>
</dbReference>
<dbReference type="InterPro" id="IPR036625">
    <property type="entry name" value="E3-bd_dom_sf"/>
</dbReference>
<dbReference type="InterPro" id="IPR004167">
    <property type="entry name" value="PSBD"/>
</dbReference>
<dbReference type="InterPro" id="IPR011053">
    <property type="entry name" value="Single_hybrid_motif"/>
</dbReference>
<dbReference type="InterPro" id="IPR006255">
    <property type="entry name" value="SucB"/>
</dbReference>
<dbReference type="NCBIfam" id="NF004309">
    <property type="entry name" value="PRK05704.1"/>
    <property type="match status" value="1"/>
</dbReference>
<dbReference type="NCBIfam" id="TIGR01347">
    <property type="entry name" value="sucB"/>
    <property type="match status" value="1"/>
</dbReference>
<dbReference type="PANTHER" id="PTHR43416:SF5">
    <property type="entry name" value="DIHYDROLIPOYLLYSINE-RESIDUE SUCCINYLTRANSFERASE COMPONENT OF 2-OXOGLUTARATE DEHYDROGENASE COMPLEX, MITOCHONDRIAL"/>
    <property type="match status" value="1"/>
</dbReference>
<dbReference type="PANTHER" id="PTHR43416">
    <property type="entry name" value="DIHYDROLIPOYLLYSINE-RESIDUE SUCCINYLTRANSFERASE COMPONENT OF 2-OXOGLUTARATE DEHYDROGENASE COMPLEX, MITOCHONDRIAL-RELATED"/>
    <property type="match status" value="1"/>
</dbReference>
<dbReference type="Pfam" id="PF00198">
    <property type="entry name" value="2-oxoacid_dh"/>
    <property type="match status" value="1"/>
</dbReference>
<dbReference type="Pfam" id="PF00364">
    <property type="entry name" value="Biotin_lipoyl"/>
    <property type="match status" value="1"/>
</dbReference>
<dbReference type="Pfam" id="PF02817">
    <property type="entry name" value="E3_binding"/>
    <property type="match status" value="1"/>
</dbReference>
<dbReference type="SUPFAM" id="SSF52777">
    <property type="entry name" value="CoA-dependent acyltransferases"/>
    <property type="match status" value="1"/>
</dbReference>
<dbReference type="SUPFAM" id="SSF51230">
    <property type="entry name" value="Single hybrid motif"/>
    <property type="match status" value="1"/>
</dbReference>
<dbReference type="PROSITE" id="PS50968">
    <property type="entry name" value="BIOTINYL_LIPOYL"/>
    <property type="match status" value="1"/>
</dbReference>
<dbReference type="PROSITE" id="PS00189">
    <property type="entry name" value="LIPOYL"/>
    <property type="match status" value="1"/>
</dbReference>
<dbReference type="PROSITE" id="PS51826">
    <property type="entry name" value="PSBD"/>
    <property type="match status" value="1"/>
</dbReference>
<accession>Q2FH26</accession>
<name>ODO2_STAA3</name>
<reference key="1">
    <citation type="journal article" date="2006" name="Lancet">
        <title>Complete genome sequence of USA300, an epidemic clone of community-acquired meticillin-resistant Staphylococcus aureus.</title>
        <authorList>
            <person name="Diep B.A."/>
            <person name="Gill S.R."/>
            <person name="Chang R.F."/>
            <person name="Phan T.H."/>
            <person name="Chen J.H."/>
            <person name="Davidson M.G."/>
            <person name="Lin F."/>
            <person name="Lin J."/>
            <person name="Carleton H.A."/>
            <person name="Mongodin E.F."/>
            <person name="Sensabaugh G.F."/>
            <person name="Perdreau-Remington F."/>
        </authorList>
    </citation>
    <scope>NUCLEOTIDE SEQUENCE [LARGE SCALE GENOMIC DNA]</scope>
    <source>
        <strain>USA300</strain>
    </source>
</reference>
<sequence length="422" mass="46673">MPEVKVPELAESITEGTIAEWLKNVGDSVEKGEAILELETDKVNVEVVSEEAGVLSEQLASEGDTVEVGQAIAIIGEGSGNASKENSNDNTPQQNEETNNKKEETTNNSVDKAEVNQANDDNQQRINATPSARRYARENGVNLAEVSPKTNDVVRKEDIDKKQQAPASTQTTQQASAKEEKKYNQYPTKPVIREKMSRRKKTAAKKLLEVSNNTAMLTTFNEVDMTNVMELRKRKKEQFMKDHDGTKLGFMSFFTKASVAALKKYPEVNAEIDGDDMITKQYYDIGVAVSTDDGLLVPFVRDCDKKNFAEIEAEIANLAVKAREKKLGLDDMVNGSFTITNGGIFGSMMSTPIINGNQAAILGMHSIITRPIAIDQDTIENRPMMYIALSYDHRIIDGKEAVGFLKTIKELIENPEDLLLES</sequence>
<protein>
    <recommendedName>
        <fullName>Dihydrolipoyllysine-residue succinyltransferase component of 2-oxoglutarate dehydrogenase complex</fullName>
        <ecNumber evidence="2">2.3.1.61</ecNumber>
    </recommendedName>
    <alternativeName>
        <fullName>2-oxoglutarate dehydrogenase complex component E2</fullName>
        <shortName>OGDC-E2</shortName>
    </alternativeName>
    <alternativeName>
        <fullName>Dihydrolipoamide succinyltransferase component of 2-oxoglutarate dehydrogenase complex</fullName>
    </alternativeName>
</protein>
<feature type="chain" id="PRO_0000288106" description="Dihydrolipoyllysine-residue succinyltransferase component of 2-oxoglutarate dehydrogenase complex">
    <location>
        <begin position="1"/>
        <end position="422"/>
    </location>
</feature>
<feature type="domain" description="Lipoyl-binding" evidence="3">
    <location>
        <begin position="1"/>
        <end position="76"/>
    </location>
</feature>
<feature type="domain" description="Peripheral subunit-binding (PSBD)" evidence="4">
    <location>
        <begin position="127"/>
        <end position="163"/>
    </location>
</feature>
<feature type="region of interest" description="Disordered" evidence="5">
    <location>
        <begin position="77"/>
        <end position="185"/>
    </location>
</feature>
<feature type="compositionally biased region" description="Polar residues" evidence="5">
    <location>
        <begin position="80"/>
        <end position="94"/>
    </location>
</feature>
<feature type="compositionally biased region" description="Polar residues" evidence="5">
    <location>
        <begin position="116"/>
        <end position="130"/>
    </location>
</feature>
<feature type="compositionally biased region" description="Basic and acidic residues" evidence="5">
    <location>
        <begin position="152"/>
        <end position="163"/>
    </location>
</feature>
<feature type="compositionally biased region" description="Low complexity" evidence="5">
    <location>
        <begin position="164"/>
        <end position="176"/>
    </location>
</feature>
<feature type="active site" evidence="2">
    <location>
        <position position="393"/>
    </location>
</feature>
<feature type="active site" evidence="2">
    <location>
        <position position="397"/>
    </location>
</feature>
<feature type="modified residue" description="N6-lipoyllysine" evidence="3">
    <location>
        <position position="42"/>
    </location>
</feature>
<proteinExistence type="inferred from homology"/>
<organism>
    <name type="scientific">Staphylococcus aureus (strain USA300)</name>
    <dbReference type="NCBI Taxonomy" id="367830"/>
    <lineage>
        <taxon>Bacteria</taxon>
        <taxon>Bacillati</taxon>
        <taxon>Bacillota</taxon>
        <taxon>Bacilli</taxon>
        <taxon>Bacillales</taxon>
        <taxon>Staphylococcaceae</taxon>
        <taxon>Staphylococcus</taxon>
    </lineage>
</organism>
<gene>
    <name type="primary">odhB</name>
    <name type="synonym">sucB</name>
    <name type="ordered locus">SAUSA300_1305</name>
</gene>